<reference key="1">
    <citation type="journal article" date="1996" name="Mol. Phylogenet. Evol.">
        <title>The simultaneous diversification of South American echimyid rodents (Hystricognathi) based on complete cytochrome b sequences.</title>
        <authorList>
            <person name="Lara M.C."/>
            <person name="Patton J.L."/>
            <person name="da Silva M.N.F."/>
        </authorList>
    </citation>
    <scope>NUCLEOTIDE SEQUENCE [GENOMIC DNA]</scope>
</reference>
<keyword id="KW-0249">Electron transport</keyword>
<keyword id="KW-0349">Heme</keyword>
<keyword id="KW-0408">Iron</keyword>
<keyword id="KW-0472">Membrane</keyword>
<keyword id="KW-0479">Metal-binding</keyword>
<keyword id="KW-0496">Mitochondrion</keyword>
<keyword id="KW-0999">Mitochondrion inner membrane</keyword>
<keyword id="KW-0679">Respiratory chain</keyword>
<keyword id="KW-0812">Transmembrane</keyword>
<keyword id="KW-1133">Transmembrane helix</keyword>
<keyword id="KW-0813">Transport</keyword>
<keyword id="KW-0830">Ubiquinone</keyword>
<geneLocation type="mitochondrion"/>
<accession>Q34814</accession>
<sequence length="379" mass="43027">MTNMRKSHPLIKMVNHSFIDLPTPSNISAWWNFGSLLGVCLMLQIITGLFLAMHYTADTLTAFSSXTHICRDVNYGWLIRYAHANGASVFFIFLYLHIGRGIYYGSYQFKETWNIGVILLLMVMGTAFMGYVLPWGQMSFWGATVITNLLSAIPYMGPTLVEWIWGGFSVDKATLTRFFAFHFILPFIITAMVMIHLLFLHETGSNNPSGLNSDSDKIPFHPYYSIKDILGLMFMLLLLLTLVLFSPDLLGDPDNYTPANPLNTPPHIKPEWYFLFAYAILRSIPNKLGGVLALALSILILMLFPIMHVSKQRSMSFRPFSQCLLWTLVANLIILTWIGGQPVEHPFIIIGQLASISYFCIILILMPTSSFMENKMLKW</sequence>
<feature type="chain" id="PRO_0000255060" description="Cytochrome b">
    <location>
        <begin position="1"/>
        <end position="379"/>
    </location>
</feature>
<feature type="transmembrane region" description="Helical" evidence="2">
    <location>
        <begin position="33"/>
        <end position="53"/>
    </location>
</feature>
<feature type="transmembrane region" description="Helical" evidence="2">
    <location>
        <begin position="77"/>
        <end position="98"/>
    </location>
</feature>
<feature type="transmembrane region" description="Helical" evidence="2">
    <location>
        <begin position="113"/>
        <end position="133"/>
    </location>
</feature>
<feature type="transmembrane region" description="Helical" evidence="2">
    <location>
        <begin position="178"/>
        <end position="198"/>
    </location>
</feature>
<feature type="transmembrane region" description="Helical" evidence="2">
    <location>
        <begin position="226"/>
        <end position="246"/>
    </location>
</feature>
<feature type="transmembrane region" description="Helical" evidence="2">
    <location>
        <begin position="288"/>
        <end position="308"/>
    </location>
</feature>
<feature type="transmembrane region" description="Helical" evidence="2">
    <location>
        <begin position="320"/>
        <end position="340"/>
    </location>
</feature>
<feature type="transmembrane region" description="Helical" evidence="2">
    <location>
        <begin position="347"/>
        <end position="367"/>
    </location>
</feature>
<feature type="binding site" description="axial binding residue" evidence="2">
    <location>
        <position position="83"/>
    </location>
    <ligand>
        <name>heme b</name>
        <dbReference type="ChEBI" id="CHEBI:60344"/>
        <label>b562</label>
    </ligand>
    <ligandPart>
        <name>Fe</name>
        <dbReference type="ChEBI" id="CHEBI:18248"/>
    </ligandPart>
</feature>
<feature type="binding site" description="axial binding residue" evidence="2">
    <location>
        <position position="97"/>
    </location>
    <ligand>
        <name>heme b</name>
        <dbReference type="ChEBI" id="CHEBI:60344"/>
        <label>b566</label>
    </ligand>
    <ligandPart>
        <name>Fe</name>
        <dbReference type="ChEBI" id="CHEBI:18248"/>
    </ligandPart>
</feature>
<feature type="binding site" description="axial binding residue" evidence="2">
    <location>
        <position position="182"/>
    </location>
    <ligand>
        <name>heme b</name>
        <dbReference type="ChEBI" id="CHEBI:60344"/>
        <label>b562</label>
    </ligand>
    <ligandPart>
        <name>Fe</name>
        <dbReference type="ChEBI" id="CHEBI:18248"/>
    </ligandPart>
</feature>
<feature type="binding site" description="axial binding residue" evidence="2">
    <location>
        <position position="196"/>
    </location>
    <ligand>
        <name>heme b</name>
        <dbReference type="ChEBI" id="CHEBI:60344"/>
        <label>b566</label>
    </ligand>
    <ligandPart>
        <name>Fe</name>
        <dbReference type="ChEBI" id="CHEBI:18248"/>
    </ligandPart>
</feature>
<feature type="binding site" evidence="2">
    <location>
        <position position="201"/>
    </location>
    <ligand>
        <name>a ubiquinone</name>
        <dbReference type="ChEBI" id="CHEBI:16389"/>
    </ligand>
</feature>
<proteinExistence type="inferred from homology"/>
<comment type="function">
    <text evidence="2">Component of the ubiquinol-cytochrome c reductase complex (complex III or cytochrome b-c1 complex) that is part of the mitochondrial respiratory chain. The b-c1 complex mediates electron transfer from ubiquinol to cytochrome c. Contributes to the generation of a proton gradient across the mitochondrial membrane that is then used for ATP synthesis.</text>
</comment>
<comment type="cofactor">
    <cofactor evidence="2">
        <name>heme b</name>
        <dbReference type="ChEBI" id="CHEBI:60344"/>
    </cofactor>
    <text evidence="2">Binds 2 heme b groups non-covalently.</text>
</comment>
<comment type="subunit">
    <text evidence="2">The cytochrome bc1 complex contains 11 subunits: 3 respiratory subunits (MT-CYB, CYC1 and UQCRFS1), 2 core proteins (UQCRC1 and UQCRC2) and 6 low-molecular weight proteins (UQCRH/QCR6, UQCRB/QCR7, UQCRQ/QCR8, UQCR10/QCR9, UQCR11/QCR10 and a cleavage product of UQCRFS1). This cytochrome bc1 complex then forms a dimer.</text>
</comment>
<comment type="subcellular location">
    <subcellularLocation>
        <location evidence="2">Mitochondrion inner membrane</location>
        <topology evidence="2">Multi-pass membrane protein</topology>
    </subcellularLocation>
</comment>
<comment type="miscellaneous">
    <text evidence="1">Heme 1 (or BL or b562) is low-potential and absorbs at about 562 nm, and heme 2 (or BH or b566) is high-potential and absorbs at about 566 nm.</text>
</comment>
<comment type="similarity">
    <text evidence="3 4">Belongs to the cytochrome b family.</text>
</comment>
<comment type="caution">
    <text evidence="2">The full-length protein contains only eight transmembrane helices, not nine as predicted by bioinformatics tools.</text>
</comment>
<gene>
    <name type="primary">MT-CYB</name>
    <name type="synonym">COB</name>
    <name type="synonym">CYTB</name>
    <name type="synonym">MTCYB</name>
</gene>
<evidence type="ECO:0000250" key="1"/>
<evidence type="ECO:0000250" key="2">
    <source>
        <dbReference type="UniProtKB" id="P00157"/>
    </source>
</evidence>
<evidence type="ECO:0000255" key="3">
    <source>
        <dbReference type="PROSITE-ProRule" id="PRU00967"/>
    </source>
</evidence>
<evidence type="ECO:0000255" key="4">
    <source>
        <dbReference type="PROSITE-ProRule" id="PRU00968"/>
    </source>
</evidence>
<organism>
    <name type="scientific">Isothrix bistriata</name>
    <name type="common">Yellow-crowned brush-tailed rat</name>
    <dbReference type="NCBI Taxonomy" id="30624"/>
    <lineage>
        <taxon>Eukaryota</taxon>
        <taxon>Metazoa</taxon>
        <taxon>Chordata</taxon>
        <taxon>Craniata</taxon>
        <taxon>Vertebrata</taxon>
        <taxon>Euteleostomi</taxon>
        <taxon>Mammalia</taxon>
        <taxon>Eutheria</taxon>
        <taxon>Euarchontoglires</taxon>
        <taxon>Glires</taxon>
        <taxon>Rodentia</taxon>
        <taxon>Hystricomorpha</taxon>
        <taxon>Echimyidae</taxon>
        <taxon>Isothrix</taxon>
    </lineage>
</organism>
<name>CYB_ISOBI</name>
<dbReference type="EMBL" id="L23355">
    <property type="protein sequence ID" value="AAC37689.1"/>
    <property type="molecule type" value="Genomic_DNA"/>
</dbReference>
<dbReference type="PIR" id="I48180">
    <property type="entry name" value="I48180"/>
</dbReference>
<dbReference type="GO" id="GO:0005743">
    <property type="term" value="C:mitochondrial inner membrane"/>
    <property type="evidence" value="ECO:0007669"/>
    <property type="project" value="UniProtKB-SubCell"/>
</dbReference>
<dbReference type="GO" id="GO:0045275">
    <property type="term" value="C:respiratory chain complex III"/>
    <property type="evidence" value="ECO:0007669"/>
    <property type="project" value="InterPro"/>
</dbReference>
<dbReference type="GO" id="GO:0046872">
    <property type="term" value="F:metal ion binding"/>
    <property type="evidence" value="ECO:0007669"/>
    <property type="project" value="UniProtKB-KW"/>
</dbReference>
<dbReference type="GO" id="GO:0008121">
    <property type="term" value="F:ubiquinol-cytochrome-c reductase activity"/>
    <property type="evidence" value="ECO:0007669"/>
    <property type="project" value="InterPro"/>
</dbReference>
<dbReference type="GO" id="GO:0006122">
    <property type="term" value="P:mitochondrial electron transport, ubiquinol to cytochrome c"/>
    <property type="evidence" value="ECO:0007669"/>
    <property type="project" value="TreeGrafter"/>
</dbReference>
<dbReference type="CDD" id="cd00290">
    <property type="entry name" value="cytochrome_b_C"/>
    <property type="match status" value="1"/>
</dbReference>
<dbReference type="CDD" id="cd00284">
    <property type="entry name" value="Cytochrome_b_N"/>
    <property type="match status" value="1"/>
</dbReference>
<dbReference type="FunFam" id="1.20.810.10:FF:000002">
    <property type="entry name" value="Cytochrome b"/>
    <property type="match status" value="1"/>
</dbReference>
<dbReference type="Gene3D" id="1.20.810.10">
    <property type="entry name" value="Cytochrome Bc1 Complex, Chain C"/>
    <property type="match status" value="1"/>
</dbReference>
<dbReference type="InterPro" id="IPR005798">
    <property type="entry name" value="Cyt_b/b6_C"/>
</dbReference>
<dbReference type="InterPro" id="IPR036150">
    <property type="entry name" value="Cyt_b/b6_C_sf"/>
</dbReference>
<dbReference type="InterPro" id="IPR005797">
    <property type="entry name" value="Cyt_b/b6_N"/>
</dbReference>
<dbReference type="InterPro" id="IPR027387">
    <property type="entry name" value="Cytb/b6-like_sf"/>
</dbReference>
<dbReference type="InterPro" id="IPR030689">
    <property type="entry name" value="Cytochrome_b"/>
</dbReference>
<dbReference type="InterPro" id="IPR048260">
    <property type="entry name" value="Cytochrome_b_C_euk/bac"/>
</dbReference>
<dbReference type="InterPro" id="IPR048259">
    <property type="entry name" value="Cytochrome_b_N_euk/bac"/>
</dbReference>
<dbReference type="InterPro" id="IPR016174">
    <property type="entry name" value="Di-haem_cyt_TM"/>
</dbReference>
<dbReference type="PANTHER" id="PTHR19271">
    <property type="entry name" value="CYTOCHROME B"/>
    <property type="match status" value="1"/>
</dbReference>
<dbReference type="PANTHER" id="PTHR19271:SF16">
    <property type="entry name" value="CYTOCHROME B"/>
    <property type="match status" value="1"/>
</dbReference>
<dbReference type="Pfam" id="PF00032">
    <property type="entry name" value="Cytochrom_B_C"/>
    <property type="match status" value="1"/>
</dbReference>
<dbReference type="Pfam" id="PF00033">
    <property type="entry name" value="Cytochrome_B"/>
    <property type="match status" value="1"/>
</dbReference>
<dbReference type="PIRSF" id="PIRSF038885">
    <property type="entry name" value="COB"/>
    <property type="match status" value="1"/>
</dbReference>
<dbReference type="SUPFAM" id="SSF81648">
    <property type="entry name" value="a domain/subunit of cytochrome bc1 complex (Ubiquinol-cytochrome c reductase)"/>
    <property type="match status" value="1"/>
</dbReference>
<dbReference type="SUPFAM" id="SSF81342">
    <property type="entry name" value="Transmembrane di-heme cytochromes"/>
    <property type="match status" value="1"/>
</dbReference>
<dbReference type="PROSITE" id="PS51003">
    <property type="entry name" value="CYTB_CTER"/>
    <property type="match status" value="1"/>
</dbReference>
<dbReference type="PROSITE" id="PS51002">
    <property type="entry name" value="CYTB_NTER"/>
    <property type="match status" value="1"/>
</dbReference>
<protein>
    <recommendedName>
        <fullName>Cytochrome b</fullName>
    </recommendedName>
    <alternativeName>
        <fullName>Complex III subunit 3</fullName>
    </alternativeName>
    <alternativeName>
        <fullName>Complex III subunit III</fullName>
    </alternativeName>
    <alternativeName>
        <fullName>Cytochrome b-c1 complex subunit 3</fullName>
    </alternativeName>
    <alternativeName>
        <fullName>Ubiquinol-cytochrome-c reductase complex cytochrome b subunit</fullName>
    </alternativeName>
</protein>